<keyword id="KW-0002">3D-structure</keyword>
<keyword id="KW-0025">Alternative splicing</keyword>
<keyword id="KW-0031">Aminopeptidase</keyword>
<keyword id="KW-0963">Cytoplasm</keyword>
<keyword id="KW-0225">Disease variant</keyword>
<keyword id="KW-0378">Hydrolase</keyword>
<keyword id="KW-0464">Manganese</keyword>
<keyword id="KW-0479">Metal-binding</keyword>
<keyword id="KW-0482">Metalloprotease</keyword>
<keyword id="KW-0496">Mitochondrion</keyword>
<keyword id="KW-0983">Nephronophthisis</keyword>
<keyword id="KW-0645">Protease</keyword>
<keyword id="KW-1267">Proteomics identification</keyword>
<keyword id="KW-1185">Reference proteome</keyword>
<keyword id="KW-0809">Transit peptide</keyword>
<name>XPP3_HUMAN</name>
<proteinExistence type="evidence at protein level"/>
<evidence type="ECO:0000255" key="1"/>
<evidence type="ECO:0000269" key="2">
    <source>
    </source>
</evidence>
<evidence type="ECO:0000269" key="3">
    <source>
    </source>
</evidence>
<evidence type="ECO:0000269" key="4">
    <source>
    </source>
</evidence>
<evidence type="ECO:0000269" key="5">
    <source>
    </source>
</evidence>
<evidence type="ECO:0000303" key="6">
    <source>
    </source>
</evidence>
<evidence type="ECO:0000303" key="7">
    <source>
    </source>
</evidence>
<evidence type="ECO:0000303" key="8">
    <source>
    </source>
</evidence>
<evidence type="ECO:0000303" key="9">
    <source>
    </source>
</evidence>
<evidence type="ECO:0000305" key="10"/>
<evidence type="ECO:0000305" key="11">
    <source>
    </source>
</evidence>
<evidence type="ECO:0000312" key="12">
    <source>
        <dbReference type="HGNC" id="HGNC:28052"/>
    </source>
</evidence>
<evidence type="ECO:0007744" key="13">
    <source>
        <dbReference type="PDB" id="5X49"/>
    </source>
</evidence>
<evidence type="ECO:0007829" key="14">
    <source>
        <dbReference type="PDB" id="5X49"/>
    </source>
</evidence>
<accession>Q9NQH7</accession>
<accession>B2R9G1</accession>
<accession>B7Z790</accession>
<accession>B7Z7B2</accession>
<accession>Q6I9V9</accession>
<accession>Q8NDA6</accession>
<accession>Q9BV27</accession>
<accession>Q9BVH0</accession>
<organism>
    <name type="scientific">Homo sapiens</name>
    <name type="common">Human</name>
    <dbReference type="NCBI Taxonomy" id="9606"/>
    <lineage>
        <taxon>Eukaryota</taxon>
        <taxon>Metazoa</taxon>
        <taxon>Chordata</taxon>
        <taxon>Craniata</taxon>
        <taxon>Vertebrata</taxon>
        <taxon>Euteleostomi</taxon>
        <taxon>Mammalia</taxon>
        <taxon>Eutheria</taxon>
        <taxon>Euarchontoglires</taxon>
        <taxon>Primates</taxon>
        <taxon>Haplorrhini</taxon>
        <taxon>Catarrhini</taxon>
        <taxon>Hominidae</taxon>
        <taxon>Homo</taxon>
    </lineage>
</organism>
<feature type="transit peptide" description="Mitochondrion" evidence="1 11">
    <location>
        <begin position="1"/>
        <end position="31"/>
    </location>
</feature>
<feature type="chain" id="PRO_0000255654" description="Xaa-Pro aminopeptidase 3">
    <location>
        <begin position="32"/>
        <end position="507"/>
    </location>
</feature>
<feature type="region of interest" description="Interaction with TNFRSF1B" evidence="4">
    <location>
        <begin position="54"/>
        <end position="79"/>
    </location>
</feature>
<feature type="binding site" evidence="5 13">
    <location>
        <position position="300"/>
    </location>
    <ligand>
        <name>substrate</name>
    </ligand>
</feature>
<feature type="binding site" evidence="5 13">
    <location>
        <position position="331"/>
    </location>
    <ligand>
        <name>Mn(2+)</name>
        <dbReference type="ChEBI" id="CHEBI:29035"/>
        <label>2</label>
    </ligand>
</feature>
<feature type="binding site" evidence="5 13">
    <location>
        <position position="331"/>
    </location>
    <ligand>
        <name>substrate</name>
    </ligand>
</feature>
<feature type="binding site" evidence="5 13">
    <location>
        <position position="342"/>
    </location>
    <ligand>
        <name>Mn(2+)</name>
        <dbReference type="ChEBI" id="CHEBI:29035"/>
        <label>1</label>
    </ligand>
</feature>
<feature type="binding site" evidence="5 13">
    <location>
        <position position="342"/>
    </location>
    <ligand>
        <name>Mn(2+)</name>
        <dbReference type="ChEBI" id="CHEBI:29035"/>
        <label>2</label>
    </ligand>
</feature>
<feature type="binding site" evidence="5 11 13">
    <location>
        <position position="342"/>
    </location>
    <ligand>
        <name>substrate</name>
    </ligand>
</feature>
<feature type="binding site" evidence="5 13">
    <location>
        <position position="424"/>
    </location>
    <ligand>
        <name>Mn(2+)</name>
        <dbReference type="ChEBI" id="CHEBI:29035"/>
        <label>1</label>
    </ligand>
</feature>
<feature type="binding site" evidence="5 13">
    <location>
        <position position="424"/>
    </location>
    <ligand>
        <name>substrate</name>
    </ligand>
</feature>
<feature type="binding site" evidence="5 13">
    <location>
        <position position="431"/>
    </location>
    <ligand>
        <name>substrate</name>
    </ligand>
</feature>
<feature type="binding site" evidence="5 13">
    <location>
        <position position="451"/>
    </location>
    <ligand>
        <name>Mn(2+)</name>
        <dbReference type="ChEBI" id="CHEBI:29035"/>
        <label>1</label>
    </ligand>
</feature>
<feature type="binding site" evidence="5 13">
    <location>
        <position position="451"/>
    </location>
    <ligand>
        <name>substrate</name>
    </ligand>
</feature>
<feature type="binding site" evidence="5 13">
    <location>
        <position position="475"/>
    </location>
    <ligand>
        <name>Mn(2+)</name>
        <dbReference type="ChEBI" id="CHEBI:29035"/>
        <label>1</label>
    </ligand>
</feature>
<feature type="binding site" evidence="5 13">
    <location>
        <position position="475"/>
    </location>
    <ligand>
        <name>Mn(2+)</name>
        <dbReference type="ChEBI" id="CHEBI:29035"/>
        <label>2</label>
    </ligand>
</feature>
<feature type="binding site" evidence="5 11 13">
    <location>
        <position position="475"/>
    </location>
    <ligand>
        <name>substrate</name>
    </ligand>
</feature>
<feature type="splice variant" id="VSP_021296" description="In isoform 2." evidence="8">
    <location>
        <begin position="1"/>
        <end position="79"/>
    </location>
</feature>
<feature type="splice variant" id="VSP_040142" description="In isoform 4." evidence="6">
    <location>
        <begin position="1"/>
        <end position="23"/>
    </location>
</feature>
<feature type="splice variant" id="VSP_040143" description="In isoform 5." evidence="6">
    <original>AFIETMFTSKAPVEEAFLYAKFEF</original>
    <variation>KSVLLARHGGSRLYSHHFGRPRLS</variation>
    <location>
        <begin position="265"/>
        <end position="288"/>
    </location>
</feature>
<feature type="splice variant" id="VSP_021297" description="In isoform 3." evidence="7">
    <original>AFIETMFTSKAPVE</original>
    <variation>RQGFSVLSRLVSNS</variation>
    <location>
        <begin position="265"/>
        <end position="278"/>
    </location>
</feature>
<feature type="splice variant" id="VSP_021298" description="In isoform 3." evidence="7">
    <location>
        <begin position="279"/>
        <end position="507"/>
    </location>
</feature>
<feature type="splice variant" id="VSP_040144" description="In isoform 5." evidence="6">
    <location>
        <begin position="289"/>
        <end position="507"/>
    </location>
</feature>
<feature type="sequence variant" id="VAR_051573" description="In dbSNP:rs17002243.">
    <original>I</original>
    <variation>L</variation>
    <location>
        <position position="450"/>
    </location>
</feature>
<feature type="sequence variant" id="VAR_063820" description="In NPHPL1; dbSNP:rs267607179." evidence="3">
    <original>G</original>
    <variation>C</variation>
    <location>
        <position position="453"/>
    </location>
</feature>
<feature type="mutagenesis site" description="Prevents cleavage of N-terminal transit peptide; when associated with A-29-30-A; A-39-40-A and A-44." evidence="4">
    <original>R</original>
    <variation>A</variation>
    <location>
        <position position="18"/>
    </location>
</feature>
<feature type="mutagenesis site" description="Prevents cleavage of N-terminal transit peptide; when associated with A-18; A-39-40-A and A-44." evidence="4">
    <original>RR</original>
    <variation>AA</variation>
    <location>
        <begin position="29"/>
        <end position="30"/>
    </location>
</feature>
<feature type="mutagenesis site" description="Prevents cleavage of N-terminal transit peptide; when associated with A-18; A-29-30-A and A-44." evidence="4">
    <original>RR</original>
    <variation>AA</variation>
    <location>
        <begin position="39"/>
        <end position="40"/>
    </location>
</feature>
<feature type="mutagenesis site" description="Prevents cleavage of N-terminal transit peptide; when associated with A-18; A-29-30-A and A-39-40-A." evidence="4">
    <original>R</original>
    <variation>A</variation>
    <location>
        <position position="44"/>
    </location>
</feature>
<feature type="mutagenesis site" description="Impairs catalytic activity." evidence="4">
    <original>H</original>
    <variation>A</variation>
    <location>
        <position position="314"/>
    </location>
</feature>
<feature type="mutagenesis site" description="Impairs catalytic activity." evidence="4">
    <original>D</original>
    <variation>A</variation>
    <location>
        <position position="342"/>
    </location>
</feature>
<feature type="mutagenesis site" description="Impairs catalytic activity." evidence="4">
    <original>E</original>
    <variation>A</variation>
    <location>
        <position position="475"/>
    </location>
</feature>
<feature type="sequence conflict" description="In Ref. 1; CAG33677." evidence="10" ref="1">
    <original>V</original>
    <variation>A</variation>
    <location>
        <position position="340"/>
    </location>
</feature>
<feature type="sequence conflict" description="In Ref. 7; AAH01681." evidence="10" ref="7">
    <original>L</original>
    <variation>F</variation>
    <location>
        <position position="486"/>
    </location>
</feature>
<feature type="strand" evidence="14">
    <location>
        <begin position="62"/>
        <end position="64"/>
    </location>
</feature>
<feature type="helix" evidence="14">
    <location>
        <begin position="69"/>
        <end position="85"/>
    </location>
</feature>
<feature type="strand" evidence="14">
    <location>
        <begin position="94"/>
        <end position="100"/>
    </location>
</feature>
<feature type="strand" evidence="14">
    <location>
        <begin position="106"/>
        <end position="108"/>
    </location>
</feature>
<feature type="helix" evidence="14">
    <location>
        <begin position="119"/>
        <end position="125"/>
    </location>
</feature>
<feature type="strand" evidence="14">
    <location>
        <begin position="133"/>
        <end position="138"/>
    </location>
</feature>
<feature type="strand" evidence="14">
    <location>
        <begin position="147"/>
        <end position="153"/>
    </location>
</feature>
<feature type="helix" evidence="14">
    <location>
        <begin position="158"/>
        <end position="164"/>
    </location>
</feature>
<feature type="helix" evidence="14">
    <location>
        <begin position="170"/>
        <end position="177"/>
    </location>
</feature>
<feature type="strand" evidence="14">
    <location>
        <begin position="180"/>
        <end position="184"/>
    </location>
</feature>
<feature type="helix" evidence="14">
    <location>
        <begin position="185"/>
        <end position="191"/>
    </location>
</feature>
<feature type="helix" evidence="14">
    <location>
        <begin position="192"/>
        <end position="196"/>
    </location>
</feature>
<feature type="strand" evidence="14">
    <location>
        <begin position="200"/>
        <end position="203"/>
    </location>
</feature>
<feature type="helix" evidence="14">
    <location>
        <begin position="212"/>
        <end position="218"/>
    </location>
</feature>
<feature type="helix" evidence="14">
    <location>
        <begin position="220"/>
        <end position="227"/>
    </location>
</feature>
<feature type="strand" evidence="14">
    <location>
        <begin position="229"/>
        <end position="231"/>
    </location>
</feature>
<feature type="helix" evidence="14">
    <location>
        <begin position="237"/>
        <end position="244"/>
    </location>
</feature>
<feature type="helix" evidence="14">
    <location>
        <begin position="249"/>
        <end position="271"/>
    </location>
</feature>
<feature type="strand" evidence="14">
    <location>
        <begin position="275"/>
        <end position="278"/>
    </location>
</feature>
<feature type="helix" evidence="14">
    <location>
        <begin position="279"/>
        <end position="292"/>
    </location>
</feature>
<feature type="strand" evidence="14">
    <location>
        <begin position="297"/>
        <end position="300"/>
    </location>
</feature>
<feature type="strand" evidence="14">
    <location>
        <begin position="303"/>
        <end position="306"/>
    </location>
</feature>
<feature type="helix" evidence="14">
    <location>
        <begin position="307"/>
        <end position="311"/>
    </location>
</feature>
<feature type="strand" evidence="14">
    <location>
        <begin position="320"/>
        <end position="322"/>
    </location>
</feature>
<feature type="strand" evidence="14">
    <location>
        <begin position="327"/>
        <end position="332"/>
    </location>
</feature>
<feature type="strand" evidence="14">
    <location>
        <begin position="334"/>
        <end position="336"/>
    </location>
</feature>
<feature type="strand" evidence="14">
    <location>
        <begin position="343"/>
        <end position="348"/>
    </location>
</feature>
<feature type="helix" evidence="14">
    <location>
        <begin position="355"/>
        <end position="373"/>
    </location>
</feature>
<feature type="helix" evidence="14">
    <location>
        <begin position="381"/>
        <end position="398"/>
    </location>
</feature>
<feature type="helix" evidence="14">
    <location>
        <begin position="405"/>
        <end position="411"/>
    </location>
</feature>
<feature type="helix" evidence="14">
    <location>
        <begin position="412"/>
        <end position="417"/>
    </location>
</feature>
<feature type="strand" evidence="14">
    <location>
        <begin position="427"/>
        <end position="431"/>
    </location>
</feature>
<feature type="strand" evidence="14">
    <location>
        <begin position="447"/>
        <end position="450"/>
    </location>
</feature>
<feature type="strand" evidence="14">
    <location>
        <begin position="453"/>
        <end position="456"/>
    </location>
</feature>
<feature type="helix" evidence="14">
    <location>
        <begin position="465"/>
        <end position="467"/>
    </location>
</feature>
<feature type="strand" evidence="14">
    <location>
        <begin position="470"/>
        <end position="473"/>
    </location>
</feature>
<feature type="strand" evidence="14">
    <location>
        <begin position="475"/>
        <end position="479"/>
    </location>
</feature>
<feature type="strand" evidence="14">
    <location>
        <begin position="482"/>
        <end position="484"/>
    </location>
</feature>
<feature type="turn" evidence="14">
    <location>
        <begin position="488"/>
        <end position="491"/>
    </location>
</feature>
<feature type="helix" evidence="14">
    <location>
        <begin position="496"/>
        <end position="502"/>
    </location>
</feature>
<sequence length="507" mass="57034">MPWLLSAPKLVPAVANVRGLSGCMLCSQRRYSLQPVPERRIPNRYLGQPSPFTHPHLLRPGEVTPGLSQVEYALRRHKLMSLIQKEAQGQSGTDQTVVVLSNPTYYMSNDIPYTFHQDNNFLYLCGFQEPDSILVLQSLPGKQLPSHKAILFVPRRDPSRELWDGPRSGTDGAIALTGVDEAYTLEEFQHLLPKMKAETNMVWYDWMRPSHAQLHSDYMQPLTEAKAKSKNKVRGVQQLIQRLRLIKSPAEIERMQIAGKLTSQAFIETMFTSKAPVEEAFLYAKFEFECRARGADILAYPPVVAGGNRSNTLHYVKNNQLIKDGEMVLLDGGCESSCYVSDITRTWPVNGRFTAPQAELYEAVLEIQRDCLALCFPGTSLENIYSMMLTLIGQKLKDLGIMKNIKENNAFKAARKYCPHHVGHYLGMDVHDTPDMPRSLPLQPGMVITIEPGIYIPEDDKDAPEKFRGLGVRIEDDVVVTQDSPLILSADCPKEMNDIEQICSQAS</sequence>
<gene>
    <name type="primary">XPNPEP3</name>
</gene>
<comment type="function">
    <text evidence="4 5">Catalyzes the removal of a penultimate prolyl residue from the N-termini of peptides, such as Leu-Pro-Ala (PubMed:25609706, PubMed:28476889). Also shows low activity towards peptides with Ala or Ser at the P1 position (PubMed:28476889).</text>
</comment>
<comment type="function">
    <molecule>Isoform 1</molecule>
    <text evidence="4">Promotes TNFRSF1B-mediated phosphorylation of MAPK8/JNK1 and MAPK9/JNK2, suggesting a function as an adapter protein for TNFRSF1B; the effect is independent of XPNPEP3 peptidase activity. May inhibit apoptotic cell death induced via TNF-TNFRSF1B signaling.</text>
</comment>
<comment type="catalytic activity">
    <reaction evidence="4 5">
        <text>Release of any N-terminal amino acid, including proline, that is linked to proline, even from a dipeptide or tripeptide.</text>
        <dbReference type="EC" id="3.4.11.9"/>
    </reaction>
</comment>
<comment type="cofactor">
    <cofactor evidence="5">
        <name>Mn(2+)</name>
        <dbReference type="ChEBI" id="CHEBI:29035"/>
    </cofactor>
    <text evidence="5">Binds 2 manganese ions per subunit.</text>
</comment>
<comment type="biophysicochemical properties">
    <kinetics>
        <KM evidence="5">1.62 mM for Met-Pro-Ala</KM>
        <KM evidence="5">2.45 mM for Leu-Pro-Ala</KM>
        <KM evidence="5">3.06 mM for Phe-Pro-Ala</KM>
        <KM evidence="5">0.55 mM for Tyr-Pro-Ala</KM>
        <KM evidence="5">4.91 mM for Tyr-Ser-Ser</KM>
        <KM evidence="5">4.2 mM for Tyr-Ala-Ala</KM>
        <KM evidence="5">3.74 mM for Tyr-Ser-Ser-Ala-Ala-Ala-Ala</KM>
    </kinetics>
</comment>
<comment type="subunit">
    <text evidence="4 5">Homodimer (PubMed:28476889). Isoform 1 interacts with TNFRSF1B/TNFR2 (activated) and TRAF2 (PubMed:25609706).</text>
</comment>
<comment type="interaction">
    <interactant intactId="EBI-1171467">
        <id>Q9NQH7</id>
    </interactant>
    <interactant intactId="EBI-358983">
        <id>P20333</id>
        <label>TNFRSF1B</label>
    </interactant>
    <organismsDiffer>false</organismsDiffer>
    <experiments>2</experiments>
</comment>
<comment type="subcellular location">
    <molecule>Isoform 1</molecule>
    <subcellularLocation>
        <location evidence="3 4">Mitochondrion</location>
    </subcellularLocation>
    <subcellularLocation>
        <location evidence="4">Cytoplasm</location>
    </subcellularLocation>
    <text evidence="4">Mainly mitochondrial. Translocates to the cytoplasm following TNFRSF1B activation.</text>
</comment>
<comment type="subcellular location">
    <molecule>Isoform 2</molecule>
    <subcellularLocation>
        <location evidence="4">Cytoplasm</location>
    </subcellularLocation>
</comment>
<comment type="alternative products">
    <event type="alternative splicing"/>
    <isoform>
        <id>Q9NQH7-1</id>
        <name>1</name>
        <name evidence="9">m</name>
        <sequence type="displayed"/>
    </isoform>
    <isoform>
        <id>Q9NQH7-2</id>
        <name>2</name>
        <name evidence="9">c</name>
        <sequence type="described" ref="VSP_021296"/>
    </isoform>
    <isoform>
        <id>Q9NQH7-3</id>
        <name>3</name>
        <sequence type="described" ref="VSP_021297 VSP_021298"/>
    </isoform>
    <isoform>
        <id>Q9NQH7-4</id>
        <name>4</name>
        <sequence type="described" ref="VSP_040142"/>
    </isoform>
    <isoform>
        <id>Q9NQH7-5</id>
        <name>5</name>
        <sequence type="described" ref="VSP_040143 VSP_040144"/>
    </isoform>
</comment>
<comment type="tissue specificity">
    <text evidence="2">Isoform 1 and isoform 2 are widely expressed, with isoform 1 being more abundant.</text>
</comment>
<comment type="disease" evidence="3">
    <disease id="DI-02901">
        <name>Nephronophthisis-like nephropathy 1</name>
        <acronym>NPHPL1</acronym>
        <description>An autosomal recessive disorder with features of nephronophthisis, a cystic kidney disease leading to end-stage renal failure. Nephronophthisis is histologically characterized by modifications of the tubules with thickening of the basement membrane, interstitial fibrosis and, in the advanced stages, medullary cysts. Typical clinical manifestation are chronic renal failure, anemia, polyuria, polydipsia, isosthenuria, and growth retardation. Associations with extrarenal symptoms are frequent. In NPHPL1 patients, extrarenal symptoms include hypertension, essential tremor, sensorineural hearing loss and gout. Severely affected individuals can manifest a mitochondrial disorder with isolated complex I deficiency activity in muscle, seizures, intellectual disability and hypertrophic dilated cardiomyopathy.</description>
        <dbReference type="MIM" id="613159"/>
    </disease>
    <text>The disease is caused by variants affecting the gene represented in this entry.</text>
</comment>
<comment type="similarity">
    <text evidence="10">Belongs to the peptidase M24B family.</text>
</comment>
<reference key="1">
    <citation type="submission" date="2004-06" db="EMBL/GenBank/DDBJ databases">
        <title>Cloning of human full open reading frames in Gateway(TM) system entry vector (pDONR201).</title>
        <authorList>
            <person name="Ebert L."/>
            <person name="Schick M."/>
            <person name="Neubert P."/>
            <person name="Schatten R."/>
            <person name="Henze S."/>
            <person name="Korn B."/>
        </authorList>
    </citation>
    <scope>NUCLEOTIDE SEQUENCE [LARGE SCALE MRNA] (ISOFORM 1)</scope>
</reference>
<reference key="2">
    <citation type="journal article" date="2004" name="Genome Biol.">
        <title>A genome annotation-driven approach to cloning the human ORFeome.</title>
        <authorList>
            <person name="Collins J.E."/>
            <person name="Wright C.L."/>
            <person name="Edwards C.A."/>
            <person name="Davis M.P."/>
            <person name="Grinham J.A."/>
            <person name="Cole C.G."/>
            <person name="Goward M.E."/>
            <person name="Aguado B."/>
            <person name="Mallya M."/>
            <person name="Mokrab Y."/>
            <person name="Huckle E.J."/>
            <person name="Beare D.M."/>
            <person name="Dunham I."/>
        </authorList>
    </citation>
    <scope>NUCLEOTIDE SEQUENCE [LARGE SCALE MRNA] (ISOFORM 1)</scope>
</reference>
<reference key="3">
    <citation type="journal article" date="2004" name="Nat. Genet.">
        <title>Complete sequencing and characterization of 21,243 full-length human cDNAs.</title>
        <authorList>
            <person name="Ota T."/>
            <person name="Suzuki Y."/>
            <person name="Nishikawa T."/>
            <person name="Otsuki T."/>
            <person name="Sugiyama T."/>
            <person name="Irie R."/>
            <person name="Wakamatsu A."/>
            <person name="Hayashi K."/>
            <person name="Sato H."/>
            <person name="Nagai K."/>
            <person name="Kimura K."/>
            <person name="Makita H."/>
            <person name="Sekine M."/>
            <person name="Obayashi M."/>
            <person name="Nishi T."/>
            <person name="Shibahara T."/>
            <person name="Tanaka T."/>
            <person name="Ishii S."/>
            <person name="Yamamoto J."/>
            <person name="Saito K."/>
            <person name="Kawai Y."/>
            <person name="Isono Y."/>
            <person name="Nakamura Y."/>
            <person name="Nagahari K."/>
            <person name="Murakami K."/>
            <person name="Yasuda T."/>
            <person name="Iwayanagi T."/>
            <person name="Wagatsuma M."/>
            <person name="Shiratori A."/>
            <person name="Sudo H."/>
            <person name="Hosoiri T."/>
            <person name="Kaku Y."/>
            <person name="Kodaira H."/>
            <person name="Kondo H."/>
            <person name="Sugawara M."/>
            <person name="Takahashi M."/>
            <person name="Kanda K."/>
            <person name="Yokoi T."/>
            <person name="Furuya T."/>
            <person name="Kikkawa E."/>
            <person name="Omura Y."/>
            <person name="Abe K."/>
            <person name="Kamihara K."/>
            <person name="Katsuta N."/>
            <person name="Sato K."/>
            <person name="Tanikawa M."/>
            <person name="Yamazaki M."/>
            <person name="Ninomiya K."/>
            <person name="Ishibashi T."/>
            <person name="Yamashita H."/>
            <person name="Murakawa K."/>
            <person name="Fujimori K."/>
            <person name="Tanai H."/>
            <person name="Kimata M."/>
            <person name="Watanabe M."/>
            <person name="Hiraoka S."/>
            <person name="Chiba Y."/>
            <person name="Ishida S."/>
            <person name="Ono Y."/>
            <person name="Takiguchi S."/>
            <person name="Watanabe S."/>
            <person name="Yosida M."/>
            <person name="Hotuta T."/>
            <person name="Kusano J."/>
            <person name="Kanehori K."/>
            <person name="Takahashi-Fujii A."/>
            <person name="Hara H."/>
            <person name="Tanase T.-O."/>
            <person name="Nomura Y."/>
            <person name="Togiya S."/>
            <person name="Komai F."/>
            <person name="Hara R."/>
            <person name="Takeuchi K."/>
            <person name="Arita M."/>
            <person name="Imose N."/>
            <person name="Musashino K."/>
            <person name="Yuuki H."/>
            <person name="Oshima A."/>
            <person name="Sasaki N."/>
            <person name="Aotsuka S."/>
            <person name="Yoshikawa Y."/>
            <person name="Matsunawa H."/>
            <person name="Ichihara T."/>
            <person name="Shiohata N."/>
            <person name="Sano S."/>
            <person name="Moriya S."/>
            <person name="Momiyama H."/>
            <person name="Satoh N."/>
            <person name="Takami S."/>
            <person name="Terashima Y."/>
            <person name="Suzuki O."/>
            <person name="Nakagawa S."/>
            <person name="Senoh A."/>
            <person name="Mizoguchi H."/>
            <person name="Goto Y."/>
            <person name="Shimizu F."/>
            <person name="Wakebe H."/>
            <person name="Hishigaki H."/>
            <person name="Watanabe T."/>
            <person name="Sugiyama A."/>
            <person name="Takemoto M."/>
            <person name="Kawakami B."/>
            <person name="Yamazaki M."/>
            <person name="Watanabe K."/>
            <person name="Kumagai A."/>
            <person name="Itakura S."/>
            <person name="Fukuzumi Y."/>
            <person name="Fujimori Y."/>
            <person name="Komiyama M."/>
            <person name="Tashiro H."/>
            <person name="Tanigami A."/>
            <person name="Fujiwara T."/>
            <person name="Ono T."/>
            <person name="Yamada K."/>
            <person name="Fujii Y."/>
            <person name="Ozaki K."/>
            <person name="Hirao M."/>
            <person name="Ohmori Y."/>
            <person name="Kawabata A."/>
            <person name="Hikiji T."/>
            <person name="Kobatake N."/>
            <person name="Inagaki H."/>
            <person name="Ikema Y."/>
            <person name="Okamoto S."/>
            <person name="Okitani R."/>
            <person name="Kawakami T."/>
            <person name="Noguchi S."/>
            <person name="Itoh T."/>
            <person name="Shigeta K."/>
            <person name="Senba T."/>
            <person name="Matsumura K."/>
            <person name="Nakajima Y."/>
            <person name="Mizuno T."/>
            <person name="Morinaga M."/>
            <person name="Sasaki M."/>
            <person name="Togashi T."/>
            <person name="Oyama M."/>
            <person name="Hata H."/>
            <person name="Watanabe M."/>
            <person name="Komatsu T."/>
            <person name="Mizushima-Sugano J."/>
            <person name="Satoh T."/>
            <person name="Shirai Y."/>
            <person name="Takahashi Y."/>
            <person name="Nakagawa K."/>
            <person name="Okumura K."/>
            <person name="Nagase T."/>
            <person name="Nomura N."/>
            <person name="Kikuchi H."/>
            <person name="Masuho Y."/>
            <person name="Yamashita R."/>
            <person name="Nakai K."/>
            <person name="Yada T."/>
            <person name="Nakamura Y."/>
            <person name="Ohara O."/>
            <person name="Isogai T."/>
            <person name="Sugano S."/>
        </authorList>
    </citation>
    <scope>NUCLEOTIDE SEQUENCE [LARGE SCALE MRNA] (ISOFORMS 1; 4 AND 5)</scope>
    <source>
        <tissue>Esophageal carcinoma</tissue>
        <tissue>Testis</tissue>
    </source>
</reference>
<reference key="4">
    <citation type="journal article" date="2007" name="BMC Genomics">
        <title>The full-ORF clone resource of the German cDNA consortium.</title>
        <authorList>
            <person name="Bechtel S."/>
            <person name="Rosenfelder H."/>
            <person name="Duda A."/>
            <person name="Schmidt C.P."/>
            <person name="Ernst U."/>
            <person name="Wellenreuther R."/>
            <person name="Mehrle A."/>
            <person name="Schuster C."/>
            <person name="Bahr A."/>
            <person name="Bloecker H."/>
            <person name="Heubner D."/>
            <person name="Hoerlein A."/>
            <person name="Michel G."/>
            <person name="Wedler H."/>
            <person name="Koehrer K."/>
            <person name="Ottenwaelder B."/>
            <person name="Poustka A."/>
            <person name="Wiemann S."/>
            <person name="Schupp I."/>
        </authorList>
    </citation>
    <scope>NUCLEOTIDE SEQUENCE [LARGE SCALE MRNA] (ISOFORM 2)</scope>
    <source>
        <tissue>Testis</tissue>
    </source>
</reference>
<reference key="5">
    <citation type="journal article" date="1999" name="Nature">
        <title>The DNA sequence of human chromosome 22.</title>
        <authorList>
            <person name="Dunham I."/>
            <person name="Hunt A.R."/>
            <person name="Collins J.E."/>
            <person name="Bruskiewich R."/>
            <person name="Beare D.M."/>
            <person name="Clamp M."/>
            <person name="Smink L.J."/>
            <person name="Ainscough R."/>
            <person name="Almeida J.P."/>
            <person name="Babbage A.K."/>
            <person name="Bagguley C."/>
            <person name="Bailey J."/>
            <person name="Barlow K.F."/>
            <person name="Bates K.N."/>
            <person name="Beasley O.P."/>
            <person name="Bird C.P."/>
            <person name="Blakey S.E."/>
            <person name="Bridgeman A.M."/>
            <person name="Buck D."/>
            <person name="Burgess J."/>
            <person name="Burrill W.D."/>
            <person name="Burton J."/>
            <person name="Carder C."/>
            <person name="Carter N.P."/>
            <person name="Chen Y."/>
            <person name="Clark G."/>
            <person name="Clegg S.M."/>
            <person name="Cobley V.E."/>
            <person name="Cole C.G."/>
            <person name="Collier R.E."/>
            <person name="Connor R."/>
            <person name="Conroy D."/>
            <person name="Corby N.R."/>
            <person name="Coville G.J."/>
            <person name="Cox A.V."/>
            <person name="Davis J."/>
            <person name="Dawson E."/>
            <person name="Dhami P.D."/>
            <person name="Dockree C."/>
            <person name="Dodsworth S.J."/>
            <person name="Durbin R.M."/>
            <person name="Ellington A.G."/>
            <person name="Evans K.L."/>
            <person name="Fey J.M."/>
            <person name="Fleming K."/>
            <person name="French L."/>
            <person name="Garner A.A."/>
            <person name="Gilbert J.G.R."/>
            <person name="Goward M.E."/>
            <person name="Grafham D.V."/>
            <person name="Griffiths M.N.D."/>
            <person name="Hall C."/>
            <person name="Hall R.E."/>
            <person name="Hall-Tamlyn G."/>
            <person name="Heathcott R.W."/>
            <person name="Ho S."/>
            <person name="Holmes S."/>
            <person name="Hunt S.E."/>
            <person name="Jones M.C."/>
            <person name="Kershaw J."/>
            <person name="Kimberley A.M."/>
            <person name="King A."/>
            <person name="Laird G.K."/>
            <person name="Langford C.F."/>
            <person name="Leversha M.A."/>
            <person name="Lloyd C."/>
            <person name="Lloyd D.M."/>
            <person name="Martyn I.D."/>
            <person name="Mashreghi-Mohammadi M."/>
            <person name="Matthews L.H."/>
            <person name="Mccann O.T."/>
            <person name="Mcclay J."/>
            <person name="Mclaren S."/>
            <person name="McMurray A.A."/>
            <person name="Milne S.A."/>
            <person name="Mortimore B.J."/>
            <person name="Odell C.N."/>
            <person name="Pavitt R."/>
            <person name="Pearce A.V."/>
            <person name="Pearson D."/>
            <person name="Phillimore B.J.C.T."/>
            <person name="Phillips S.H."/>
            <person name="Plumb R.W."/>
            <person name="Ramsay H."/>
            <person name="Ramsey Y."/>
            <person name="Rogers L."/>
            <person name="Ross M.T."/>
            <person name="Scott C.E."/>
            <person name="Sehra H.K."/>
            <person name="Skuce C.D."/>
            <person name="Smalley S."/>
            <person name="Smith M.L."/>
            <person name="Soderlund C."/>
            <person name="Spragon L."/>
            <person name="Steward C.A."/>
            <person name="Sulston J.E."/>
            <person name="Swann R.M."/>
            <person name="Vaudin M."/>
            <person name="Wall M."/>
            <person name="Wallis J.M."/>
            <person name="Whiteley M.N."/>
            <person name="Willey D.L."/>
            <person name="Williams L."/>
            <person name="Williams S.A."/>
            <person name="Williamson H."/>
            <person name="Wilmer T.E."/>
            <person name="Wilming L."/>
            <person name="Wright C.L."/>
            <person name="Hubbard T."/>
            <person name="Bentley D.R."/>
            <person name="Beck S."/>
            <person name="Rogers J."/>
            <person name="Shimizu N."/>
            <person name="Minoshima S."/>
            <person name="Kawasaki K."/>
            <person name="Sasaki T."/>
            <person name="Asakawa S."/>
            <person name="Kudoh J."/>
            <person name="Shintani A."/>
            <person name="Shibuya K."/>
            <person name="Yoshizaki Y."/>
            <person name="Aoki N."/>
            <person name="Mitsuyama S."/>
            <person name="Roe B.A."/>
            <person name="Chen F."/>
            <person name="Chu L."/>
            <person name="Crabtree J."/>
            <person name="Deschamps S."/>
            <person name="Do A."/>
            <person name="Do T."/>
            <person name="Dorman A."/>
            <person name="Fang F."/>
            <person name="Fu Y."/>
            <person name="Hu P."/>
            <person name="Hua A."/>
            <person name="Kenton S."/>
            <person name="Lai H."/>
            <person name="Lao H.I."/>
            <person name="Lewis J."/>
            <person name="Lewis S."/>
            <person name="Lin S.-P."/>
            <person name="Loh P."/>
            <person name="Malaj E."/>
            <person name="Nguyen T."/>
            <person name="Pan H."/>
            <person name="Phan S."/>
            <person name="Qi S."/>
            <person name="Qian Y."/>
            <person name="Ray L."/>
            <person name="Ren Q."/>
            <person name="Shaull S."/>
            <person name="Sloan D."/>
            <person name="Song L."/>
            <person name="Wang Q."/>
            <person name="Wang Y."/>
            <person name="Wang Z."/>
            <person name="White J."/>
            <person name="Willingham D."/>
            <person name="Wu H."/>
            <person name="Yao Z."/>
            <person name="Zhan M."/>
            <person name="Zhang G."/>
            <person name="Chissoe S."/>
            <person name="Murray J."/>
            <person name="Miller N."/>
            <person name="Minx P."/>
            <person name="Fulton R."/>
            <person name="Johnson D."/>
            <person name="Bemis G."/>
            <person name="Bentley D."/>
            <person name="Bradshaw H."/>
            <person name="Bourne S."/>
            <person name="Cordes M."/>
            <person name="Du Z."/>
            <person name="Fulton L."/>
            <person name="Goela D."/>
            <person name="Graves T."/>
            <person name="Hawkins J."/>
            <person name="Hinds K."/>
            <person name="Kemp K."/>
            <person name="Latreille P."/>
            <person name="Layman D."/>
            <person name="Ozersky P."/>
            <person name="Rohlfing T."/>
            <person name="Scheet P."/>
            <person name="Walker C."/>
            <person name="Wamsley A."/>
            <person name="Wohldmann P."/>
            <person name="Pepin K."/>
            <person name="Nelson J."/>
            <person name="Korf I."/>
            <person name="Bedell J.A."/>
            <person name="Hillier L.W."/>
            <person name="Mardis E."/>
            <person name="Waterston R."/>
            <person name="Wilson R."/>
            <person name="Emanuel B.S."/>
            <person name="Shaikh T."/>
            <person name="Kurahashi H."/>
            <person name="Saitta S."/>
            <person name="Budarf M.L."/>
            <person name="McDermid H.E."/>
            <person name="Johnson A."/>
            <person name="Wong A.C.C."/>
            <person name="Morrow B.E."/>
            <person name="Edelmann L."/>
            <person name="Kim U.J."/>
            <person name="Shizuya H."/>
            <person name="Simon M.I."/>
            <person name="Dumanski J.P."/>
            <person name="Peyrard M."/>
            <person name="Kedra D."/>
            <person name="Seroussi E."/>
            <person name="Fransson I."/>
            <person name="Tapia I."/>
            <person name="Bruder C.E."/>
            <person name="O'Brien K.P."/>
            <person name="Wilkinson P."/>
            <person name="Bodenteich A."/>
            <person name="Hartman K."/>
            <person name="Hu X."/>
            <person name="Khan A.S."/>
            <person name="Lane L."/>
            <person name="Tilahun Y."/>
            <person name="Wright H."/>
        </authorList>
    </citation>
    <scope>NUCLEOTIDE SEQUENCE [LARGE SCALE GENOMIC DNA]</scope>
</reference>
<reference key="6">
    <citation type="submission" date="2005-07" db="EMBL/GenBank/DDBJ databases">
        <authorList>
            <person name="Mural R.J."/>
            <person name="Istrail S."/>
            <person name="Sutton G.G."/>
            <person name="Florea L."/>
            <person name="Halpern A.L."/>
            <person name="Mobarry C.M."/>
            <person name="Lippert R."/>
            <person name="Walenz B."/>
            <person name="Shatkay H."/>
            <person name="Dew I."/>
            <person name="Miller J.R."/>
            <person name="Flanigan M.J."/>
            <person name="Edwards N.J."/>
            <person name="Bolanos R."/>
            <person name="Fasulo D."/>
            <person name="Halldorsson B.V."/>
            <person name="Hannenhalli S."/>
            <person name="Turner R."/>
            <person name="Yooseph S."/>
            <person name="Lu F."/>
            <person name="Nusskern D.R."/>
            <person name="Shue B.C."/>
            <person name="Zheng X.H."/>
            <person name="Zhong F."/>
            <person name="Delcher A.L."/>
            <person name="Huson D.H."/>
            <person name="Kravitz S.A."/>
            <person name="Mouchard L."/>
            <person name="Reinert K."/>
            <person name="Remington K.A."/>
            <person name="Clark A.G."/>
            <person name="Waterman M.S."/>
            <person name="Eichler E.E."/>
            <person name="Adams M.D."/>
            <person name="Hunkapiller M.W."/>
            <person name="Myers E.W."/>
            <person name="Venter J.C."/>
        </authorList>
    </citation>
    <scope>NUCLEOTIDE SEQUENCE [LARGE SCALE GENOMIC DNA]</scope>
</reference>
<reference key="7">
    <citation type="journal article" date="2004" name="Genome Res.">
        <title>The status, quality, and expansion of the NIH full-length cDNA project: the Mammalian Gene Collection (MGC).</title>
        <authorList>
            <consortium name="The MGC Project Team"/>
        </authorList>
    </citation>
    <scope>NUCLEOTIDE SEQUENCE [LARGE SCALE MRNA] (ISOFORMS 1 AND 3)</scope>
    <source>
        <tissue>Lung</tissue>
    </source>
</reference>
<reference key="8">
    <citation type="journal article" date="2005" name="Arch. Biochem. Biophys.">
        <title>Aminopeptidase P isozyme expression in human tissues and peripheral blood mononuclear cell fractions.</title>
        <authorList>
            <person name="Ersahin C."/>
            <person name="Szpaderska A.M."/>
            <person name="Orawski A.T."/>
            <person name="Simmons W.H."/>
        </authorList>
    </citation>
    <scope>IDENTIFICATION OF ISOFORMS 1 AND 2</scope>
    <scope>TISSUE SPECIFICITY</scope>
</reference>
<reference key="9">
    <citation type="journal article" date="2011" name="BMC Syst. Biol.">
        <title>Initial characterization of the human central proteome.</title>
        <authorList>
            <person name="Burkard T.R."/>
            <person name="Planyavsky M."/>
            <person name="Kaupe I."/>
            <person name="Breitwieser F.P."/>
            <person name="Buerckstuemmer T."/>
            <person name="Bennett K.L."/>
            <person name="Superti-Furga G."/>
            <person name="Colinge J."/>
        </authorList>
    </citation>
    <scope>IDENTIFICATION BY MASS SPECTROMETRY [LARGE SCALE ANALYSIS]</scope>
</reference>
<reference key="10">
    <citation type="journal article" date="2015" name="J. Cell Sci.">
        <title>Aminopeptidase P3, a new member of the TNF-TNFR2 signaling complex, induces phosphorylation of JNK1 and JNK2.</title>
        <authorList>
            <person name="Inoue M."/>
            <person name="Kamada H."/>
            <person name="Abe Y."/>
            <person name="Higashisaka K."/>
            <person name="Nagano K."/>
            <person name="Mukai Y."/>
            <person name="Yoshioka Y."/>
            <person name="Tsutsumi Y."/>
            <person name="Tsunoda S."/>
        </authorList>
    </citation>
    <scope>FUNCTION</scope>
    <scope>CATALYTIC ACTIVITY</scope>
    <scope>INTERACTION WITH TNFRSF1B AND TRAF2</scope>
    <scope>SUBCELLULAR LOCATION (ISOFORMS 1 AND 2)</scope>
    <scope>CLEAVAGE OF TRANSIT PEPTIDE</scope>
    <scope>MUTAGENESIS OF ARG-18; 29-ARG-ARG-30; 39-ARG-ARG-40; ARG-44; HIS-314; ASP-342 AND GLU-475</scope>
    <scope>IDENTIFICATION BY MASS SPECTROMETRY</scope>
</reference>
<reference key="11">
    <citation type="journal article" date="2015" name="Proteomics">
        <title>N-terminome analysis of the human mitochondrial proteome.</title>
        <authorList>
            <person name="Vaca Jacome A.S."/>
            <person name="Rabilloud T."/>
            <person name="Schaeffer-Reiss C."/>
            <person name="Rompais M."/>
            <person name="Ayoub D."/>
            <person name="Lane L."/>
            <person name="Bairoch A."/>
            <person name="Van Dorsselaer A."/>
            <person name="Carapito C."/>
        </authorList>
    </citation>
    <scope>IDENTIFICATION BY MASS SPECTROMETRY [LARGE SCALE ANALYSIS]</scope>
</reference>
<reference key="12">
    <citation type="journal article" date="2017" name="J. Biol. Chem.">
        <title>Structure of the human aminopeptidase XPNPEP3 and comparison of its in vitro activity with Icp55 orthologs: Insights into diverse cellular processes.</title>
        <authorList>
            <person name="Singh R."/>
            <person name="Jamdar S.N."/>
            <person name="Goyal V.D."/>
            <person name="Kumar A."/>
            <person name="Ghosh B."/>
            <person name="Makde R.D."/>
        </authorList>
    </citation>
    <scope>X-RAY CRYSTALLOGRAPHY (1.65 ANGSTROMS) OF 54-507 IN COMPLEX WITH INHIBITOR APSTATIN AND MANGANESE IONS</scope>
    <scope>FUNCTION</scope>
    <scope>CATALYTIC ACTIVITY</scope>
    <scope>BIOPHYSICOCHEMICAL PROPERTIES</scope>
    <scope>SUBUNIT</scope>
</reference>
<reference key="13">
    <citation type="journal article" date="2010" name="J. Clin. Invest.">
        <title>Individuals with mutations in XPNPEP3, which encodes a mitochondrial protein, develop a nephronophthisis-like nephropathy.</title>
        <authorList>
            <person name="O'Toole J.F."/>
            <person name="Liu Y."/>
            <person name="Davis E.E."/>
            <person name="Westlake C.J."/>
            <person name="Attanasio M."/>
            <person name="Otto E.A."/>
            <person name="Seelow D."/>
            <person name="Nurnberg G."/>
            <person name="Becker C."/>
            <person name="Nuutinen M."/>
            <person name="Karppa M."/>
            <person name="Ignatius J."/>
            <person name="Uusimaa J."/>
            <person name="Pakanen S."/>
            <person name="Jaakkola E."/>
            <person name="van den Heuvel L.P."/>
            <person name="Fehrenbach H."/>
            <person name="Wiggins R."/>
            <person name="Goyal M."/>
            <person name="Zhou W."/>
            <person name="Wolf M.T."/>
            <person name="Wise E."/>
            <person name="Helou J."/>
            <person name="Allen S.J."/>
            <person name="Murga-Zamalloa C.A."/>
            <person name="Ashraf S."/>
            <person name="Chaki M."/>
            <person name="Heeringa S."/>
            <person name="Chernin G."/>
            <person name="Hoskins B.E."/>
            <person name="Chaib H."/>
            <person name="Gleeson J."/>
            <person name="Kusakabe T."/>
            <person name="Suzuki T."/>
            <person name="Isaac R.E."/>
            <person name="Quarmby L.M."/>
            <person name="Tennant B."/>
            <person name="Fujioka H."/>
            <person name="Tuominen H."/>
            <person name="Hassinen I."/>
            <person name="Lohi H."/>
            <person name="van Houten J.L."/>
            <person name="Rotig A."/>
            <person name="Sayer J.A."/>
            <person name="Rolinski B."/>
            <person name="Freisinger P."/>
            <person name="Madhavan S.M."/>
            <person name="Herzer M."/>
            <person name="Madignier F."/>
            <person name="Prokisch H."/>
            <person name="Nurnberg P."/>
            <person name="Jackson P.K."/>
            <person name="Khanna H."/>
            <person name="Katsanis N."/>
            <person name="Hildebrandt F."/>
        </authorList>
    </citation>
    <scope>VARIANT NPHPL1 CYS-453</scope>
    <scope>SUBCELLULAR LOCATION</scope>
</reference>
<reference key="14">
    <citation type="journal article" date="2010" name="J. Clin. Invest.">
        <authorList>
            <person name="O'Toole J.F."/>
            <person name="Liu Y."/>
            <person name="Davis E.E."/>
            <person name="Westlake C.J."/>
            <person name="Attanasio M."/>
            <person name="Otto E.A."/>
            <person name="Seelow D."/>
            <person name="Nurnberg G."/>
            <person name="Becker C."/>
            <person name="Nuutinen M."/>
            <person name="Karppa M."/>
            <person name="Ignatius J."/>
            <person name="Uusimaa J."/>
            <person name="Pakanen S."/>
            <person name="Jaakkola E."/>
            <person name="van den Heuvel L.P."/>
            <person name="Fehrenbach H."/>
            <person name="Wiggins R."/>
            <person name="Goyal M."/>
            <person name="Zhou W."/>
            <person name="Wolf M.T."/>
            <person name="Wise E."/>
            <person name="Helou J."/>
            <person name="Allen S.J."/>
            <person name="Murga-Zamalloa C.A."/>
            <person name="Ashraf S."/>
            <person name="Chaki M."/>
            <person name="Heeringa S."/>
            <person name="Chernin G."/>
            <person name="Hoskins B.E."/>
            <person name="Chaib H."/>
            <person name="Gleeson J."/>
            <person name="Kusakabe T."/>
            <person name="Suzuki T."/>
            <person name="Isaac R.E."/>
            <person name="Quarmby L.M."/>
            <person name="Tennant B."/>
            <person name="Fujioka H."/>
            <person name="Tuominen H."/>
            <person name="Hassinen I."/>
            <person name="Lohi H."/>
            <person name="van Houten J.L."/>
            <person name="Rotig A."/>
            <person name="Sayer J.A."/>
            <person name="Rolinski B."/>
            <person name="Freisinger P."/>
            <person name="Madhavan S.M."/>
            <person name="Herzer M."/>
            <person name="Madignier F."/>
            <person name="Prokisch H."/>
            <person name="Nurnberg P."/>
            <person name="Jackson P.K."/>
            <person name="Khanna H."/>
            <person name="Katsanis N."/>
            <person name="Hildebrandt F."/>
        </authorList>
    </citation>
    <scope>ERRATUM OF PUBMED:20179356</scope>
</reference>
<dbReference type="EC" id="3.4.11.9" evidence="4 5"/>
<dbReference type="EMBL" id="CR457396">
    <property type="protein sequence ID" value="CAG33677.1"/>
    <property type="molecule type" value="mRNA"/>
</dbReference>
<dbReference type="EMBL" id="AL365514">
    <property type="protein sequence ID" value="CAB97210.1"/>
    <property type="molecule type" value="mRNA"/>
</dbReference>
<dbReference type="EMBL" id="CR456442">
    <property type="protein sequence ID" value="CAG30328.1"/>
    <property type="molecule type" value="mRNA"/>
</dbReference>
<dbReference type="EMBL" id="AK301635">
    <property type="protein sequence ID" value="BAH13526.1"/>
    <property type="molecule type" value="mRNA"/>
</dbReference>
<dbReference type="EMBL" id="AK301758">
    <property type="protein sequence ID" value="BAH13548.1"/>
    <property type="molecule type" value="mRNA"/>
</dbReference>
<dbReference type="EMBL" id="AK313770">
    <property type="protein sequence ID" value="BAG36508.1"/>
    <property type="molecule type" value="mRNA"/>
</dbReference>
<dbReference type="EMBL" id="AL834310">
    <property type="protein sequence ID" value="CAD38980.1"/>
    <property type="molecule type" value="mRNA"/>
</dbReference>
<dbReference type="EMBL" id="AL035450">
    <property type="status" value="NOT_ANNOTATED_CDS"/>
    <property type="molecule type" value="Genomic_DNA"/>
</dbReference>
<dbReference type="EMBL" id="Z98048">
    <property type="status" value="NOT_ANNOTATED_CDS"/>
    <property type="molecule type" value="Genomic_DNA"/>
</dbReference>
<dbReference type="EMBL" id="CH471095">
    <property type="protein sequence ID" value="EAW60399.1"/>
    <property type="molecule type" value="Genomic_DNA"/>
</dbReference>
<dbReference type="EMBL" id="BC001208">
    <property type="protein sequence ID" value="AAH01208.1"/>
    <property type="molecule type" value="mRNA"/>
</dbReference>
<dbReference type="EMBL" id="BC001681">
    <property type="protein sequence ID" value="AAH01681.1"/>
    <property type="molecule type" value="mRNA"/>
</dbReference>
<dbReference type="EMBL" id="BC004989">
    <property type="protein sequence ID" value="AAH04989.1"/>
    <property type="molecule type" value="mRNA"/>
</dbReference>
<dbReference type="CCDS" id="CCDS14007.1">
    <molecule id="Q9NQH7-1"/>
</dbReference>
<dbReference type="RefSeq" id="NP_071381.1">
    <molecule id="Q9NQH7-1"/>
    <property type="nucleotide sequence ID" value="NM_022098.4"/>
</dbReference>
<dbReference type="PDB" id="5X49">
    <property type="method" value="X-ray"/>
    <property type="resolution" value="1.65 A"/>
    <property type="chains" value="A/B=54-507"/>
</dbReference>
<dbReference type="PDBsum" id="5X49"/>
<dbReference type="SMR" id="Q9NQH7"/>
<dbReference type="BioGRID" id="121997">
    <property type="interactions" value="84"/>
</dbReference>
<dbReference type="FunCoup" id="Q9NQH7">
    <property type="interactions" value="1996"/>
</dbReference>
<dbReference type="IntAct" id="Q9NQH7">
    <property type="interactions" value="69"/>
</dbReference>
<dbReference type="MINT" id="Q9NQH7"/>
<dbReference type="STRING" id="9606.ENSP00000349658"/>
<dbReference type="ChEMBL" id="CHEMBL3831223"/>
<dbReference type="MEROPS" id="M24.026"/>
<dbReference type="GlyGen" id="Q9NQH7">
    <property type="glycosylation" value="1 site"/>
</dbReference>
<dbReference type="iPTMnet" id="Q9NQH7"/>
<dbReference type="PhosphoSitePlus" id="Q9NQH7"/>
<dbReference type="SwissPalm" id="Q9NQH7"/>
<dbReference type="BioMuta" id="XPNPEP3"/>
<dbReference type="DMDM" id="74761652"/>
<dbReference type="jPOST" id="Q9NQH7"/>
<dbReference type="MassIVE" id="Q9NQH7"/>
<dbReference type="PaxDb" id="9606-ENSP00000349658"/>
<dbReference type="PeptideAtlas" id="Q9NQH7"/>
<dbReference type="ProteomicsDB" id="82154">
    <molecule id="Q9NQH7-1"/>
</dbReference>
<dbReference type="ProteomicsDB" id="82155">
    <molecule id="Q9NQH7-2"/>
</dbReference>
<dbReference type="ProteomicsDB" id="82156">
    <molecule id="Q9NQH7-3"/>
</dbReference>
<dbReference type="ProteomicsDB" id="82157">
    <molecule id="Q9NQH7-4"/>
</dbReference>
<dbReference type="ProteomicsDB" id="82158">
    <molecule id="Q9NQH7-5"/>
</dbReference>
<dbReference type="Pumba" id="Q9NQH7"/>
<dbReference type="Antibodypedia" id="259">
    <property type="antibodies" value="152 antibodies from 26 providers"/>
</dbReference>
<dbReference type="DNASU" id="63929"/>
<dbReference type="Ensembl" id="ENST00000357137.9">
    <molecule id="Q9NQH7-1"/>
    <property type="protein sequence ID" value="ENSP00000349658.4"/>
    <property type="gene ID" value="ENSG00000196236.13"/>
</dbReference>
<dbReference type="GeneID" id="63929"/>
<dbReference type="KEGG" id="hsa:63929"/>
<dbReference type="MANE-Select" id="ENST00000357137.9">
    <property type="protein sequence ID" value="ENSP00000349658.4"/>
    <property type="RefSeq nucleotide sequence ID" value="NM_022098.4"/>
    <property type="RefSeq protein sequence ID" value="NP_071381.1"/>
</dbReference>
<dbReference type="UCSC" id="uc003azh.4">
    <molecule id="Q9NQH7-1"/>
    <property type="organism name" value="human"/>
</dbReference>
<dbReference type="AGR" id="HGNC:28052"/>
<dbReference type="CTD" id="63929"/>
<dbReference type="DisGeNET" id="63929"/>
<dbReference type="GeneCards" id="XPNPEP3"/>
<dbReference type="GeneReviews" id="XPNPEP3"/>
<dbReference type="HGNC" id="HGNC:28052">
    <property type="gene designation" value="XPNPEP3"/>
</dbReference>
<dbReference type="HPA" id="ENSG00000196236">
    <property type="expression patterns" value="Low tissue specificity"/>
</dbReference>
<dbReference type="MalaCards" id="XPNPEP3"/>
<dbReference type="MIM" id="613159">
    <property type="type" value="phenotype"/>
</dbReference>
<dbReference type="MIM" id="613553">
    <property type="type" value="gene"/>
</dbReference>
<dbReference type="neXtProt" id="NX_Q9NQH7"/>
<dbReference type="OpenTargets" id="ENSG00000196236"/>
<dbReference type="Orphanet" id="93589">
    <property type="disease" value="Late-onset nephronophthisis"/>
</dbReference>
<dbReference type="PharmGKB" id="PA147357130"/>
<dbReference type="VEuPathDB" id="HostDB:ENSG00000196236"/>
<dbReference type="eggNOG" id="KOG2414">
    <property type="taxonomic scope" value="Eukaryota"/>
</dbReference>
<dbReference type="GeneTree" id="ENSGT00940000153657"/>
<dbReference type="HOGENOM" id="CLU_017266_1_1_1"/>
<dbReference type="InParanoid" id="Q9NQH7"/>
<dbReference type="OMA" id="DSYFWYL"/>
<dbReference type="OrthoDB" id="4215474at2759"/>
<dbReference type="PAN-GO" id="Q9NQH7">
    <property type="GO annotations" value="2 GO annotations based on evolutionary models"/>
</dbReference>
<dbReference type="PhylomeDB" id="Q9NQH7"/>
<dbReference type="TreeFam" id="TF314484"/>
<dbReference type="BRENDA" id="3.4.11.9">
    <property type="organism ID" value="2681"/>
</dbReference>
<dbReference type="PathwayCommons" id="Q9NQH7"/>
<dbReference type="SABIO-RK" id="Q9NQH7"/>
<dbReference type="SignaLink" id="Q9NQH7"/>
<dbReference type="BioGRID-ORCS" id="63929">
    <property type="hits" value="25 hits in 1154 CRISPR screens"/>
</dbReference>
<dbReference type="ChiTaRS" id="XPNPEP3">
    <property type="organism name" value="human"/>
</dbReference>
<dbReference type="GeneWiki" id="XPNPEP3"/>
<dbReference type="GenomeRNAi" id="63929"/>
<dbReference type="Pharos" id="Q9NQH7">
    <property type="development level" value="Tbio"/>
</dbReference>
<dbReference type="PRO" id="PR:Q9NQH7"/>
<dbReference type="Proteomes" id="UP000005640">
    <property type="component" value="Chromosome 22"/>
</dbReference>
<dbReference type="RNAct" id="Q9NQH7">
    <property type="molecule type" value="protein"/>
</dbReference>
<dbReference type="Bgee" id="ENSG00000196236">
    <property type="expression patterns" value="Expressed in buccal mucosa cell and 183 other cell types or tissues"/>
</dbReference>
<dbReference type="ExpressionAtlas" id="Q9NQH7">
    <property type="expression patterns" value="baseline and differential"/>
</dbReference>
<dbReference type="GO" id="GO:0005737">
    <property type="term" value="C:cytoplasm"/>
    <property type="evidence" value="ECO:0000314"/>
    <property type="project" value="UniProtKB"/>
</dbReference>
<dbReference type="GO" id="GO:0005829">
    <property type="term" value="C:cytosol"/>
    <property type="evidence" value="ECO:0000314"/>
    <property type="project" value="HPA"/>
</dbReference>
<dbReference type="GO" id="GO:0005739">
    <property type="term" value="C:mitochondrion"/>
    <property type="evidence" value="ECO:0000314"/>
    <property type="project" value="HPA"/>
</dbReference>
<dbReference type="GO" id="GO:0004177">
    <property type="term" value="F:aminopeptidase activity"/>
    <property type="evidence" value="ECO:0000315"/>
    <property type="project" value="MGI"/>
</dbReference>
<dbReference type="GO" id="GO:0030145">
    <property type="term" value="F:manganese ion binding"/>
    <property type="evidence" value="ECO:0000314"/>
    <property type="project" value="UniProtKB"/>
</dbReference>
<dbReference type="GO" id="GO:0070006">
    <property type="term" value="F:metalloaminopeptidase activity"/>
    <property type="evidence" value="ECO:0000314"/>
    <property type="project" value="UniProtKB"/>
</dbReference>
<dbReference type="GO" id="GO:0042803">
    <property type="term" value="F:protein homodimerization activity"/>
    <property type="evidence" value="ECO:0000353"/>
    <property type="project" value="UniProtKB"/>
</dbReference>
<dbReference type="GO" id="GO:0003094">
    <property type="term" value="P:glomerular filtration"/>
    <property type="evidence" value="ECO:0000315"/>
    <property type="project" value="MGI"/>
</dbReference>
<dbReference type="GO" id="GO:0016485">
    <property type="term" value="P:protein processing"/>
    <property type="evidence" value="ECO:0000315"/>
    <property type="project" value="MGI"/>
</dbReference>
<dbReference type="GO" id="GO:0006508">
    <property type="term" value="P:proteolysis"/>
    <property type="evidence" value="ECO:0000314"/>
    <property type="project" value="UniProtKB"/>
</dbReference>
<dbReference type="CDD" id="cd01087">
    <property type="entry name" value="Prolidase"/>
    <property type="match status" value="1"/>
</dbReference>
<dbReference type="FunFam" id="3.40.350.10:FF:000013">
    <property type="entry name" value="probable Xaa-Pro aminopeptidase 3"/>
    <property type="match status" value="1"/>
</dbReference>
<dbReference type="FunFam" id="3.90.230.10:FF:000002">
    <property type="entry name" value="Xaa-Pro aminopeptidase 3"/>
    <property type="match status" value="1"/>
</dbReference>
<dbReference type="Gene3D" id="3.90.230.10">
    <property type="entry name" value="Creatinase/methionine aminopeptidase superfamily"/>
    <property type="match status" value="1"/>
</dbReference>
<dbReference type="Gene3D" id="3.40.350.10">
    <property type="entry name" value="Creatinase/prolidase N-terminal domain"/>
    <property type="match status" value="1"/>
</dbReference>
<dbReference type="InterPro" id="IPR007865">
    <property type="entry name" value="Aminopep_P_N"/>
</dbReference>
<dbReference type="InterPro" id="IPR029149">
    <property type="entry name" value="Creatin/AminoP/Spt16_N"/>
</dbReference>
<dbReference type="InterPro" id="IPR036005">
    <property type="entry name" value="Creatinase/aminopeptidase-like"/>
</dbReference>
<dbReference type="InterPro" id="IPR000994">
    <property type="entry name" value="Pept_M24"/>
</dbReference>
<dbReference type="InterPro" id="IPR052433">
    <property type="entry name" value="X-Pro_dipept-like"/>
</dbReference>
<dbReference type="PANTHER" id="PTHR43226">
    <property type="entry name" value="XAA-PRO AMINOPEPTIDASE 3"/>
    <property type="match status" value="1"/>
</dbReference>
<dbReference type="PANTHER" id="PTHR43226:SF4">
    <property type="entry name" value="XAA-PRO AMINOPEPTIDASE 3"/>
    <property type="match status" value="1"/>
</dbReference>
<dbReference type="Pfam" id="PF05195">
    <property type="entry name" value="AMP_N"/>
    <property type="match status" value="1"/>
</dbReference>
<dbReference type="Pfam" id="PF00557">
    <property type="entry name" value="Peptidase_M24"/>
    <property type="match status" value="1"/>
</dbReference>
<dbReference type="SMART" id="SM01011">
    <property type="entry name" value="AMP_N"/>
    <property type="match status" value="1"/>
</dbReference>
<dbReference type="SUPFAM" id="SSF55920">
    <property type="entry name" value="Creatinase/aminopeptidase"/>
    <property type="match status" value="1"/>
</dbReference>
<dbReference type="SUPFAM" id="SSF53092">
    <property type="entry name" value="Creatinase/prolidase N-terminal domain"/>
    <property type="match status" value="1"/>
</dbReference>
<protein>
    <recommendedName>
        <fullName evidence="12">Xaa-Pro aminopeptidase 3</fullName>
        <shortName>X-Pro aminopeptidase 3</shortName>
        <ecNumber evidence="4 5">3.4.11.9</ecNumber>
    </recommendedName>
    <alternativeName>
        <fullName>Aminopeptidase P3</fullName>
        <shortName>APP3</shortName>
    </alternativeName>
</protein>